<dbReference type="EMBL" id="L41518">
    <property type="protein sequence ID" value="AAC98405.1"/>
    <property type="molecule type" value="Genomic_DNA"/>
</dbReference>
<dbReference type="SMR" id="Q48478"/>
<dbReference type="GO" id="GO:0005886">
    <property type="term" value="C:plasma membrane"/>
    <property type="evidence" value="ECO:0007669"/>
    <property type="project" value="UniProtKB-SubCell"/>
</dbReference>
<dbReference type="GO" id="GO:0140359">
    <property type="term" value="F:ABC-type transporter activity"/>
    <property type="evidence" value="ECO:0007669"/>
    <property type="project" value="InterPro"/>
</dbReference>
<dbReference type="GO" id="GO:0015920">
    <property type="term" value="P:lipopolysaccharide transport"/>
    <property type="evidence" value="ECO:0007669"/>
    <property type="project" value="TreeGrafter"/>
</dbReference>
<dbReference type="GO" id="GO:0015774">
    <property type="term" value="P:polysaccharide transport"/>
    <property type="evidence" value="ECO:0007669"/>
    <property type="project" value="UniProtKB-KW"/>
</dbReference>
<dbReference type="InterPro" id="IPR013525">
    <property type="entry name" value="ABC2_TM"/>
</dbReference>
<dbReference type="InterPro" id="IPR047817">
    <property type="entry name" value="ABC2_TM_bact-type"/>
</dbReference>
<dbReference type="PANTHER" id="PTHR30413">
    <property type="entry name" value="INNER MEMBRANE TRANSPORT PERMEASE"/>
    <property type="match status" value="1"/>
</dbReference>
<dbReference type="PANTHER" id="PTHR30413:SF8">
    <property type="entry name" value="TRANSPORT PERMEASE PROTEIN"/>
    <property type="match status" value="1"/>
</dbReference>
<dbReference type="Pfam" id="PF01061">
    <property type="entry name" value="ABC2_membrane"/>
    <property type="match status" value="1"/>
</dbReference>
<dbReference type="PROSITE" id="PS51012">
    <property type="entry name" value="ABC_TM2"/>
    <property type="match status" value="1"/>
</dbReference>
<accession>Q48478</accession>
<name>RFBA2_KLEPN</name>
<comment type="function">
    <text>May form an ATP-driven O-antigen export apparatus, in association with RfbB.</text>
</comment>
<comment type="subcellular location">
    <subcellularLocation>
        <location evidence="3">Cell inner membrane</location>
        <topology evidence="3">Multi-pass membrane protein</topology>
    </subcellularLocation>
</comment>
<comment type="similarity">
    <text evidence="3">Belongs to the ABC-2 integral membrane protein family.</text>
</comment>
<feature type="chain" id="PRO_0000182993" description="O-antigen export system permease protein RfbA">
    <location>
        <begin position="1"/>
        <end position="259"/>
    </location>
</feature>
<feature type="transmembrane region" description="Helical" evidence="1">
    <location>
        <begin position="33"/>
        <end position="53"/>
    </location>
</feature>
<feature type="transmembrane region" description="Helical" evidence="1">
    <location>
        <begin position="73"/>
        <end position="95"/>
    </location>
</feature>
<feature type="transmembrane region" description="Helical" evidence="1">
    <location>
        <begin position="111"/>
        <end position="131"/>
    </location>
</feature>
<feature type="transmembrane region" description="Helical" evidence="1">
    <location>
        <begin position="142"/>
        <end position="162"/>
    </location>
</feature>
<feature type="transmembrane region" description="Helical" evidence="1">
    <location>
        <begin position="176"/>
        <end position="196"/>
    </location>
</feature>
<feature type="transmembrane region" description="Helical" evidence="1">
    <location>
        <begin position="228"/>
        <end position="248"/>
    </location>
</feature>
<feature type="domain" description="ABC transmembrane type-2" evidence="2">
    <location>
        <begin position="33"/>
        <end position="251"/>
    </location>
</feature>
<organism>
    <name type="scientific">Klebsiella pneumoniae</name>
    <dbReference type="NCBI Taxonomy" id="573"/>
    <lineage>
        <taxon>Bacteria</taxon>
        <taxon>Pseudomonadati</taxon>
        <taxon>Pseudomonadota</taxon>
        <taxon>Gammaproteobacteria</taxon>
        <taxon>Enterobacterales</taxon>
        <taxon>Enterobacteriaceae</taxon>
        <taxon>Klebsiella/Raoultella group</taxon>
        <taxon>Klebsiella</taxon>
        <taxon>Klebsiella pneumoniae complex</taxon>
    </lineage>
</organism>
<evidence type="ECO:0000255" key="1"/>
<evidence type="ECO:0000255" key="2">
    <source>
        <dbReference type="PROSITE-ProRule" id="PRU00442"/>
    </source>
</evidence>
<evidence type="ECO:0000305" key="3"/>
<protein>
    <recommendedName>
        <fullName>O-antigen export system permease protein RfbA</fullName>
    </recommendedName>
</protein>
<gene>
    <name type="primary">rfbA</name>
</gene>
<sequence>MSLKMKYNLGYLFDLLVVITNKDLKVRYKSSVFGYLWSIANPLLFAMIYYFIFKLVMRVQIPNYTLFLITGLFPWQWFASSATNSLFSFIANAQIIKKTVFPRSVIPLSNVMMEGLHFLCTIPVIIAFLFVYGMRPSLSWLWGIPIIAIGQVIFTFGISIIFSTLNLFFRDLERFVSLGIMLMFYCTPILYASDMIPEKFSWIITYNPLASMILSWRELFMNGVLNYEYISILYITGFILTIVGLAIFNKLKYRFAEIL</sequence>
<keyword id="KW-0997">Cell inner membrane</keyword>
<keyword id="KW-1003">Cell membrane</keyword>
<keyword id="KW-0472">Membrane</keyword>
<keyword id="KW-0625">Polysaccharide transport</keyword>
<keyword id="KW-0762">Sugar transport</keyword>
<keyword id="KW-0812">Transmembrane</keyword>
<keyword id="KW-1133">Transmembrane helix</keyword>
<keyword id="KW-0813">Transport</keyword>
<reference key="1">
    <citation type="journal article" date="1996" name="J. Bacteriol.">
        <title>Clonally diverse rfb gene clusters are involved in expression of a family of related D-galactan O antigens in Klebsiella species.</title>
        <authorList>
            <person name="Kelly R.F."/>
            <person name="Whitfield C."/>
        </authorList>
    </citation>
    <scope>NUCLEOTIDE SEQUENCE [GENOMIC DNA]</scope>
    <source>
        <strain>Serotype O8</strain>
    </source>
</reference>
<proteinExistence type="inferred from homology"/>